<dbReference type="EC" id="2.7.7.101" evidence="1"/>
<dbReference type="EMBL" id="CP001338">
    <property type="protein sequence ID" value="ACL16066.1"/>
    <property type="molecule type" value="Genomic_DNA"/>
</dbReference>
<dbReference type="RefSeq" id="WP_012617385.1">
    <property type="nucleotide sequence ID" value="NC_011832.1"/>
</dbReference>
<dbReference type="SMR" id="B8GFL8"/>
<dbReference type="STRING" id="521011.Mpal_0699"/>
<dbReference type="GeneID" id="7271845"/>
<dbReference type="KEGG" id="mpl:Mpal_0699"/>
<dbReference type="eggNOG" id="arCOG04281">
    <property type="taxonomic scope" value="Archaea"/>
</dbReference>
<dbReference type="HOGENOM" id="CLU_034626_0_0_2"/>
<dbReference type="OrthoDB" id="8643at2157"/>
<dbReference type="Proteomes" id="UP000002457">
    <property type="component" value="Chromosome"/>
</dbReference>
<dbReference type="GO" id="GO:0005737">
    <property type="term" value="C:cytoplasm"/>
    <property type="evidence" value="ECO:0007669"/>
    <property type="project" value="TreeGrafter"/>
</dbReference>
<dbReference type="GO" id="GO:0000428">
    <property type="term" value="C:DNA-directed RNA polymerase complex"/>
    <property type="evidence" value="ECO:0007669"/>
    <property type="project" value="UniProtKB-KW"/>
</dbReference>
<dbReference type="GO" id="GO:0000178">
    <property type="term" value="C:exosome (RNase complex)"/>
    <property type="evidence" value="ECO:0007669"/>
    <property type="project" value="InterPro"/>
</dbReference>
<dbReference type="GO" id="GO:1990077">
    <property type="term" value="C:primosome complex"/>
    <property type="evidence" value="ECO:0007669"/>
    <property type="project" value="UniProtKB-KW"/>
</dbReference>
<dbReference type="GO" id="GO:0003899">
    <property type="term" value="F:DNA-directed RNA polymerase activity"/>
    <property type="evidence" value="ECO:0007669"/>
    <property type="project" value="InterPro"/>
</dbReference>
<dbReference type="GO" id="GO:0046872">
    <property type="term" value="F:metal ion binding"/>
    <property type="evidence" value="ECO:0007669"/>
    <property type="project" value="UniProtKB-KW"/>
</dbReference>
<dbReference type="GO" id="GO:0008143">
    <property type="term" value="F:poly(A) binding"/>
    <property type="evidence" value="ECO:0007669"/>
    <property type="project" value="InterPro"/>
</dbReference>
<dbReference type="GO" id="GO:0006269">
    <property type="term" value="P:DNA replication, synthesis of primer"/>
    <property type="evidence" value="ECO:0007669"/>
    <property type="project" value="UniProtKB-UniRule"/>
</dbReference>
<dbReference type="CDD" id="cd01029">
    <property type="entry name" value="TOPRIM_primases"/>
    <property type="match status" value="1"/>
</dbReference>
<dbReference type="FunFam" id="3.40.1360.10:FF:000010">
    <property type="entry name" value="DNA primase DnaG"/>
    <property type="match status" value="1"/>
</dbReference>
<dbReference type="Gene3D" id="3.40.1360.10">
    <property type="match status" value="1"/>
</dbReference>
<dbReference type="HAMAP" id="MF_00007">
    <property type="entry name" value="DNA_primase_DnaG_arc"/>
    <property type="match status" value="1"/>
</dbReference>
<dbReference type="InterPro" id="IPR050219">
    <property type="entry name" value="DnaG_primase"/>
</dbReference>
<dbReference type="InterPro" id="IPR020607">
    <property type="entry name" value="Primase_DnaG_arc"/>
</dbReference>
<dbReference type="InterPro" id="IPR034154">
    <property type="entry name" value="TOPRIM_DnaG/twinkle"/>
</dbReference>
<dbReference type="InterPro" id="IPR006171">
    <property type="entry name" value="TOPRIM_dom"/>
</dbReference>
<dbReference type="NCBIfam" id="NF003108">
    <property type="entry name" value="PRK04031.1-1"/>
    <property type="match status" value="1"/>
</dbReference>
<dbReference type="PANTHER" id="PTHR30313">
    <property type="entry name" value="DNA PRIMASE"/>
    <property type="match status" value="1"/>
</dbReference>
<dbReference type="PANTHER" id="PTHR30313:SF2">
    <property type="entry name" value="DNA PRIMASE"/>
    <property type="match status" value="1"/>
</dbReference>
<dbReference type="Pfam" id="PF13662">
    <property type="entry name" value="Toprim_4"/>
    <property type="match status" value="1"/>
</dbReference>
<dbReference type="SMART" id="SM00493">
    <property type="entry name" value="TOPRIM"/>
    <property type="match status" value="1"/>
</dbReference>
<dbReference type="SUPFAM" id="SSF56731">
    <property type="entry name" value="DNA primase core"/>
    <property type="match status" value="1"/>
</dbReference>
<dbReference type="PROSITE" id="PS50880">
    <property type="entry name" value="TOPRIM"/>
    <property type="match status" value="1"/>
</dbReference>
<feature type="chain" id="PRO_1000197503" description="DNA primase DnaG">
    <location>
        <begin position="1"/>
        <end position="417"/>
    </location>
</feature>
<feature type="domain" description="Toprim" evidence="1">
    <location>
        <begin position="171"/>
        <end position="257"/>
    </location>
</feature>
<feature type="region of interest" description="Disordered" evidence="2">
    <location>
        <begin position="278"/>
        <end position="325"/>
    </location>
</feature>
<feature type="compositionally biased region" description="Basic and acidic residues" evidence="2">
    <location>
        <begin position="279"/>
        <end position="289"/>
    </location>
</feature>
<feature type="binding site" evidence="1">
    <location>
        <position position="177"/>
    </location>
    <ligand>
        <name>Mg(2+)</name>
        <dbReference type="ChEBI" id="CHEBI:18420"/>
        <label>1</label>
        <note>catalytic</note>
    </ligand>
</feature>
<feature type="binding site" evidence="1">
    <location>
        <position position="219"/>
    </location>
    <ligand>
        <name>Mg(2+)</name>
        <dbReference type="ChEBI" id="CHEBI:18420"/>
        <label>1</label>
        <note>catalytic</note>
    </ligand>
</feature>
<feature type="binding site" evidence="1">
    <location>
        <position position="219"/>
    </location>
    <ligand>
        <name>Mg(2+)</name>
        <dbReference type="ChEBI" id="CHEBI:18420"/>
        <label>2</label>
    </ligand>
</feature>
<feature type="binding site" evidence="1">
    <location>
        <position position="221"/>
    </location>
    <ligand>
        <name>Mg(2+)</name>
        <dbReference type="ChEBI" id="CHEBI:18420"/>
        <label>2</label>
    </ligand>
</feature>
<name>DNAG_METPE</name>
<protein>
    <recommendedName>
        <fullName evidence="1">DNA primase DnaG</fullName>
        <ecNumber evidence="1">2.7.7.101</ecNumber>
    </recommendedName>
</protein>
<proteinExistence type="inferred from homology"/>
<sequence length="417" mass="46091">MYSPDTTKYLIHLNLQAEGVVEKPDVVGAIFGQTEGLLGEDLDLRDLQRTGRVGRIDVQISSKRGETKGDILISSSLDRAETAILAASLETIDRVGPCVAHVVVEGIEDIRVTKRRKIVDRAKELLLDHFEDGSIDSYELLDEVREAIRVEKIGSLGDEKIPAGPNVMDSDAIIIVEGRADVINLLKYGIKNAVAVEGTNVPAQIVDLADKKTATAFLDGDRGGELILRELLQVADIDYVAFSPRGKSVEDMARKEIIKALRNKVPVEYVRDQFYGDVPGEKRTQDLRPQKPGASEQNSIKKENVENENESTPTSFEPISEPAPPVTLHDHMERVSGHLIARFLSPEFTILNETRADDVEMAIDQMTTEVSGLVIDRVVDQKLLDRLVGKGVEFVAARDFNGIIKRPLSIRLMKIAQ</sequence>
<gene>
    <name evidence="1" type="primary">dnaG</name>
    <name type="ordered locus">Mpal_0699</name>
</gene>
<accession>B8GFL8</accession>
<reference key="1">
    <citation type="journal article" date="2015" name="Genome Announc.">
        <title>Complete Genome Sequence of Methanosphaerula palustris E1-9CT, a Hydrogenotrophic Methanogen Isolated from a Minerotrophic Fen Peatland.</title>
        <authorList>
            <person name="Cadillo-Quiroz H."/>
            <person name="Browne P."/>
            <person name="Kyrpides N."/>
            <person name="Woyke T."/>
            <person name="Goodwin L."/>
            <person name="Detter C."/>
            <person name="Yavitt J.B."/>
            <person name="Zinder S.H."/>
        </authorList>
    </citation>
    <scope>NUCLEOTIDE SEQUENCE [LARGE SCALE GENOMIC DNA]</scope>
    <source>
        <strain>ATCC BAA-1556 / DSM 19958 / E1-9c</strain>
    </source>
</reference>
<organism>
    <name type="scientific">Methanosphaerula palustris (strain ATCC BAA-1556 / DSM 19958 / E1-9c)</name>
    <dbReference type="NCBI Taxonomy" id="521011"/>
    <lineage>
        <taxon>Archaea</taxon>
        <taxon>Methanobacteriati</taxon>
        <taxon>Methanobacteriota</taxon>
        <taxon>Stenosarchaea group</taxon>
        <taxon>Methanomicrobia</taxon>
        <taxon>Methanomicrobiales</taxon>
        <taxon>Methanoregulaceae</taxon>
        <taxon>Methanosphaerula</taxon>
    </lineage>
</organism>
<keyword id="KW-0235">DNA replication</keyword>
<keyword id="KW-0240">DNA-directed RNA polymerase</keyword>
<keyword id="KW-0460">Magnesium</keyword>
<keyword id="KW-0479">Metal-binding</keyword>
<keyword id="KW-0548">Nucleotidyltransferase</keyword>
<keyword id="KW-0639">Primosome</keyword>
<keyword id="KW-1185">Reference proteome</keyword>
<keyword id="KW-0804">Transcription</keyword>
<keyword id="KW-0808">Transferase</keyword>
<comment type="function">
    <text evidence="1">RNA polymerase that catalyzes the synthesis of short RNA molecules used as primers for DNA polymerase during DNA replication.</text>
</comment>
<comment type="catalytic activity">
    <reaction evidence="1">
        <text>ssDNA + n NTP = ssDNA/pppN(pN)n-1 hybrid + (n-1) diphosphate.</text>
        <dbReference type="EC" id="2.7.7.101"/>
    </reaction>
</comment>
<comment type="cofactor">
    <cofactor evidence="1">
        <name>Mg(2+)</name>
        <dbReference type="ChEBI" id="CHEBI:18420"/>
    </cofactor>
    <text evidence="1">Binds two Mg(2+) per subunit.</text>
</comment>
<comment type="subunit">
    <text evidence="1">Forms a ternary complex with MCM helicase and DNA.</text>
</comment>
<comment type="similarity">
    <text evidence="1">Belongs to the archaeal DnaG primase family.</text>
</comment>
<evidence type="ECO:0000255" key="1">
    <source>
        <dbReference type="HAMAP-Rule" id="MF_00007"/>
    </source>
</evidence>
<evidence type="ECO:0000256" key="2">
    <source>
        <dbReference type="SAM" id="MobiDB-lite"/>
    </source>
</evidence>